<protein>
    <recommendedName>
        <fullName evidence="1">Chaperonin GroEL</fullName>
        <ecNumber evidence="1">5.6.1.7</ecNumber>
    </recommendedName>
    <alternativeName>
        <fullName evidence="1">60 kDa chaperonin</fullName>
    </alternativeName>
    <alternativeName>
        <fullName evidence="1">Chaperonin-60</fullName>
        <shortName evidence="1">Cpn60</shortName>
    </alternativeName>
</protein>
<feature type="chain" id="PRO_0000256894" description="Chaperonin GroEL">
    <location>
        <begin position="1"/>
        <end position="547"/>
    </location>
</feature>
<feature type="region of interest" description="Disordered" evidence="2">
    <location>
        <begin position="525"/>
        <end position="547"/>
    </location>
</feature>
<feature type="compositionally biased region" description="Gly residues" evidence="2">
    <location>
        <begin position="531"/>
        <end position="547"/>
    </location>
</feature>
<feature type="binding site" evidence="1">
    <location>
        <begin position="30"/>
        <end position="33"/>
    </location>
    <ligand>
        <name>ATP</name>
        <dbReference type="ChEBI" id="CHEBI:30616"/>
    </ligand>
</feature>
<feature type="binding site" evidence="1">
    <location>
        <position position="51"/>
    </location>
    <ligand>
        <name>ATP</name>
        <dbReference type="ChEBI" id="CHEBI:30616"/>
    </ligand>
</feature>
<feature type="binding site" evidence="1">
    <location>
        <begin position="87"/>
        <end position="91"/>
    </location>
    <ligand>
        <name>ATP</name>
        <dbReference type="ChEBI" id="CHEBI:30616"/>
    </ligand>
</feature>
<feature type="binding site" evidence="1">
    <location>
        <position position="415"/>
    </location>
    <ligand>
        <name>ATP</name>
        <dbReference type="ChEBI" id="CHEBI:30616"/>
    </ligand>
</feature>
<feature type="binding site" evidence="1">
    <location>
        <position position="495"/>
    </location>
    <ligand>
        <name>ATP</name>
        <dbReference type="ChEBI" id="CHEBI:30616"/>
    </ligand>
</feature>
<evidence type="ECO:0000255" key="1">
    <source>
        <dbReference type="HAMAP-Rule" id="MF_00600"/>
    </source>
</evidence>
<evidence type="ECO:0000256" key="2">
    <source>
        <dbReference type="SAM" id="MobiDB-lite"/>
    </source>
</evidence>
<keyword id="KW-0067">ATP-binding</keyword>
<keyword id="KW-0143">Chaperone</keyword>
<keyword id="KW-0963">Cytoplasm</keyword>
<keyword id="KW-0413">Isomerase</keyword>
<keyword id="KW-0547">Nucleotide-binding</keyword>
<keyword id="KW-1185">Reference proteome</keyword>
<accession>Q1QVJ7</accession>
<proteinExistence type="inferred from homology"/>
<reference key="1">
    <citation type="journal article" date="2011" name="Stand. Genomic Sci.">
        <title>Complete genome sequence of the halophilic and highly halotolerant Chromohalobacter salexigens type strain (1H11(T)).</title>
        <authorList>
            <person name="Copeland A."/>
            <person name="O'Connor K."/>
            <person name="Lucas S."/>
            <person name="Lapidus A."/>
            <person name="Berry K.W."/>
            <person name="Detter J.C."/>
            <person name="Del Rio T.G."/>
            <person name="Hammon N."/>
            <person name="Dalin E."/>
            <person name="Tice H."/>
            <person name="Pitluck S."/>
            <person name="Bruce D."/>
            <person name="Goodwin L."/>
            <person name="Han C."/>
            <person name="Tapia R."/>
            <person name="Saunders E."/>
            <person name="Schmutz J."/>
            <person name="Brettin T."/>
            <person name="Larimer F."/>
            <person name="Land M."/>
            <person name="Hauser L."/>
            <person name="Vargas C."/>
            <person name="Nieto J.J."/>
            <person name="Kyrpides N.C."/>
            <person name="Ivanova N."/>
            <person name="Goker M."/>
            <person name="Klenk H.P."/>
            <person name="Csonka L.N."/>
            <person name="Woyke T."/>
        </authorList>
    </citation>
    <scope>NUCLEOTIDE SEQUENCE [LARGE SCALE GENOMIC DNA]</scope>
    <source>
        <strain>ATCC BAA-138 / DSM 3043 / CIP 106854 / NCIMB 13768 / 1H11</strain>
    </source>
</reference>
<dbReference type="EC" id="5.6.1.7" evidence="1"/>
<dbReference type="EMBL" id="CP000285">
    <property type="protein sequence ID" value="ABE59511.1"/>
    <property type="molecule type" value="Genomic_DNA"/>
</dbReference>
<dbReference type="RefSeq" id="WP_011507457.1">
    <property type="nucleotide sequence ID" value="NC_007963.1"/>
</dbReference>
<dbReference type="SMR" id="Q1QVJ7"/>
<dbReference type="STRING" id="290398.Csal_2160"/>
<dbReference type="GeneID" id="95334879"/>
<dbReference type="KEGG" id="csa:Csal_2160"/>
<dbReference type="eggNOG" id="COG0459">
    <property type="taxonomic scope" value="Bacteria"/>
</dbReference>
<dbReference type="HOGENOM" id="CLU_016503_3_0_6"/>
<dbReference type="OrthoDB" id="9766614at2"/>
<dbReference type="Proteomes" id="UP000000239">
    <property type="component" value="Chromosome"/>
</dbReference>
<dbReference type="GO" id="GO:0005737">
    <property type="term" value="C:cytoplasm"/>
    <property type="evidence" value="ECO:0007669"/>
    <property type="project" value="UniProtKB-SubCell"/>
</dbReference>
<dbReference type="GO" id="GO:0005524">
    <property type="term" value="F:ATP binding"/>
    <property type="evidence" value="ECO:0007669"/>
    <property type="project" value="UniProtKB-UniRule"/>
</dbReference>
<dbReference type="GO" id="GO:0140662">
    <property type="term" value="F:ATP-dependent protein folding chaperone"/>
    <property type="evidence" value="ECO:0007669"/>
    <property type="project" value="InterPro"/>
</dbReference>
<dbReference type="GO" id="GO:0016853">
    <property type="term" value="F:isomerase activity"/>
    <property type="evidence" value="ECO:0007669"/>
    <property type="project" value="UniProtKB-KW"/>
</dbReference>
<dbReference type="GO" id="GO:0051082">
    <property type="term" value="F:unfolded protein binding"/>
    <property type="evidence" value="ECO:0007669"/>
    <property type="project" value="UniProtKB-UniRule"/>
</dbReference>
<dbReference type="GO" id="GO:0042026">
    <property type="term" value="P:protein refolding"/>
    <property type="evidence" value="ECO:0007669"/>
    <property type="project" value="UniProtKB-UniRule"/>
</dbReference>
<dbReference type="CDD" id="cd03344">
    <property type="entry name" value="GroEL"/>
    <property type="match status" value="1"/>
</dbReference>
<dbReference type="FunFam" id="1.10.560.10:FF:000001">
    <property type="entry name" value="60 kDa chaperonin"/>
    <property type="match status" value="1"/>
</dbReference>
<dbReference type="FunFam" id="3.50.7.10:FF:000001">
    <property type="entry name" value="60 kDa chaperonin"/>
    <property type="match status" value="1"/>
</dbReference>
<dbReference type="Gene3D" id="3.50.7.10">
    <property type="entry name" value="GroEL"/>
    <property type="match status" value="1"/>
</dbReference>
<dbReference type="Gene3D" id="1.10.560.10">
    <property type="entry name" value="GroEL-like equatorial domain"/>
    <property type="match status" value="1"/>
</dbReference>
<dbReference type="Gene3D" id="3.30.260.10">
    <property type="entry name" value="TCP-1-like chaperonin intermediate domain"/>
    <property type="match status" value="1"/>
</dbReference>
<dbReference type="HAMAP" id="MF_00600">
    <property type="entry name" value="CH60"/>
    <property type="match status" value="1"/>
</dbReference>
<dbReference type="InterPro" id="IPR018370">
    <property type="entry name" value="Chaperonin_Cpn60_CS"/>
</dbReference>
<dbReference type="InterPro" id="IPR001844">
    <property type="entry name" value="Cpn60/GroEL"/>
</dbReference>
<dbReference type="InterPro" id="IPR002423">
    <property type="entry name" value="Cpn60/GroEL/TCP-1"/>
</dbReference>
<dbReference type="InterPro" id="IPR027409">
    <property type="entry name" value="GroEL-like_apical_dom_sf"/>
</dbReference>
<dbReference type="InterPro" id="IPR027413">
    <property type="entry name" value="GROEL-like_equatorial_sf"/>
</dbReference>
<dbReference type="InterPro" id="IPR027410">
    <property type="entry name" value="TCP-1-like_intermed_sf"/>
</dbReference>
<dbReference type="NCBIfam" id="TIGR02348">
    <property type="entry name" value="GroEL"/>
    <property type="match status" value="1"/>
</dbReference>
<dbReference type="NCBIfam" id="NF000592">
    <property type="entry name" value="PRK00013.1"/>
    <property type="match status" value="1"/>
</dbReference>
<dbReference type="NCBIfam" id="NF009487">
    <property type="entry name" value="PRK12849.1"/>
    <property type="match status" value="1"/>
</dbReference>
<dbReference type="NCBIfam" id="NF009488">
    <property type="entry name" value="PRK12850.1"/>
    <property type="match status" value="1"/>
</dbReference>
<dbReference type="NCBIfam" id="NF009489">
    <property type="entry name" value="PRK12851.1"/>
    <property type="match status" value="1"/>
</dbReference>
<dbReference type="PANTHER" id="PTHR45633">
    <property type="entry name" value="60 KDA HEAT SHOCK PROTEIN, MITOCHONDRIAL"/>
    <property type="match status" value="1"/>
</dbReference>
<dbReference type="Pfam" id="PF00118">
    <property type="entry name" value="Cpn60_TCP1"/>
    <property type="match status" value="1"/>
</dbReference>
<dbReference type="PRINTS" id="PR00298">
    <property type="entry name" value="CHAPERONIN60"/>
</dbReference>
<dbReference type="SUPFAM" id="SSF52029">
    <property type="entry name" value="GroEL apical domain-like"/>
    <property type="match status" value="1"/>
</dbReference>
<dbReference type="SUPFAM" id="SSF48592">
    <property type="entry name" value="GroEL equatorial domain-like"/>
    <property type="match status" value="1"/>
</dbReference>
<dbReference type="SUPFAM" id="SSF54849">
    <property type="entry name" value="GroEL-intermediate domain like"/>
    <property type="match status" value="1"/>
</dbReference>
<dbReference type="PROSITE" id="PS00296">
    <property type="entry name" value="CHAPERONINS_CPN60"/>
    <property type="match status" value="1"/>
</dbReference>
<sequence length="547" mass="57661">MAAKQIKFSDDARKRMARGVNVLADAVKVTLGPKGRNVVLEKSFGSPTVTKDGVSVAKEIELKDKFENMGAQMVKEVASKTSDVAGDGTTTATVLAQSIVTEGMKGVTAGMNPMDLKRGIDQAVDAAVKEIQSLSVPCTDAKAIAQVGTISANGDKRIGEIIADAMQKVGKEGVITVDEGRGFEDELEVVEGMQFDRGYLSPYFVTNQDTMMVELEDPYLLMVDKKISNIRELLPVLEAVAKSGKPLGIIAEDIEGEALATLVVNTMRGIVKAAATKAPGFGDRRKAMLQDIAILTGGTVISEEVGLTLEQANLDHLGSAKRVTMSKENTTIIDGAGVEADIEARVSQIRAQIEDTSSDYDREKLQERVAKLAGGVAVIRVGAATEFEMKEKKARVEDALHSTRAAVEEGVVPGGGTALVRILNKLVDLKGDNEDQTHGIAIALRAMEAPLRQIVTNAGQEASVIVNQVKAGEGNYGYNAQTGEYGDLFDMGVLDPAKVTRSALQSAGSVAGLMITTEAMIADDPDEKEAGGGAPDMGGMGGMGGMM</sequence>
<gene>
    <name evidence="1" type="primary">groEL</name>
    <name evidence="1" type="synonym">groL</name>
    <name type="ordered locus">Csal_2160</name>
</gene>
<organism>
    <name type="scientific">Chromohalobacter salexigens (strain ATCC BAA-138 / DSM 3043 / CIP 106854 / NCIMB 13768 / 1H11)</name>
    <dbReference type="NCBI Taxonomy" id="290398"/>
    <lineage>
        <taxon>Bacteria</taxon>
        <taxon>Pseudomonadati</taxon>
        <taxon>Pseudomonadota</taxon>
        <taxon>Gammaproteobacteria</taxon>
        <taxon>Oceanospirillales</taxon>
        <taxon>Halomonadaceae</taxon>
        <taxon>Chromohalobacter</taxon>
    </lineage>
</organism>
<comment type="function">
    <text evidence="1">Together with its co-chaperonin GroES, plays an essential role in assisting protein folding. The GroEL-GroES system forms a nano-cage that allows encapsulation of the non-native substrate proteins and provides a physical environment optimized to promote and accelerate protein folding.</text>
</comment>
<comment type="catalytic activity">
    <reaction evidence="1">
        <text>ATP + H2O + a folded polypeptide = ADP + phosphate + an unfolded polypeptide.</text>
        <dbReference type="EC" id="5.6.1.7"/>
    </reaction>
</comment>
<comment type="subunit">
    <text evidence="1">Forms a cylinder of 14 subunits composed of two heptameric rings stacked back-to-back. Interacts with the co-chaperonin GroES.</text>
</comment>
<comment type="subcellular location">
    <subcellularLocation>
        <location evidence="1">Cytoplasm</location>
    </subcellularLocation>
</comment>
<comment type="similarity">
    <text evidence="1">Belongs to the chaperonin (HSP60) family.</text>
</comment>
<name>CH60_CHRSD</name>